<comment type="function">
    <text evidence="1">Probable core component of the endosomal sorting required for transport complex III (ESCRT-III) which is involved in multivesicular bodies (MVBs) formation and sorting of endosomal cargo proteins into MVBs. MVBs contain intraluminal vesicles (ILVs) that are generated by invagination and scission from the limiting membrane of the endosome and mostly are delivered to lysosomes enabling degradation of membrane proteins, such as stimulated growth factor receptors, lysosomal enzymes and lipids. In the ESCRT-III complex, it probably serves as an acceptor for the ESCRT-II complex on endosomal membranes (By similarity).</text>
</comment>
<comment type="subunit">
    <text evidence="1">Probable core component of the endosomal sorting required for transport complex III (ESCRT-III). ESCRT-III components are thought to multimerize to form a flat lattice on the perimeter membrane of the endosome (By similarity).</text>
</comment>
<comment type="subcellular location">
    <subcellularLocation>
        <location evidence="1">Endomembrane system</location>
        <topology evidence="1">Lipid-anchor</topology>
    </subcellularLocation>
    <subcellularLocation>
        <location evidence="1">Late endosome membrane</location>
    </subcellularLocation>
</comment>
<comment type="similarity">
    <text evidence="4">Belongs to the SNF7 family.</text>
</comment>
<organism>
    <name type="scientific">Xenopus laevis</name>
    <name type="common">African clawed frog</name>
    <dbReference type="NCBI Taxonomy" id="8355"/>
    <lineage>
        <taxon>Eukaryota</taxon>
        <taxon>Metazoa</taxon>
        <taxon>Chordata</taxon>
        <taxon>Craniata</taxon>
        <taxon>Vertebrata</taxon>
        <taxon>Euteleostomi</taxon>
        <taxon>Amphibia</taxon>
        <taxon>Batrachia</taxon>
        <taxon>Anura</taxon>
        <taxon>Pipoidea</taxon>
        <taxon>Pipidae</taxon>
        <taxon>Xenopodinae</taxon>
        <taxon>Xenopus</taxon>
        <taxon>Xenopus</taxon>
    </lineage>
</organism>
<keyword id="KW-0175">Coiled coil</keyword>
<keyword id="KW-0967">Endosome</keyword>
<keyword id="KW-0449">Lipoprotein</keyword>
<keyword id="KW-0472">Membrane</keyword>
<keyword id="KW-0519">Myristate</keyword>
<keyword id="KW-0653">Protein transport</keyword>
<keyword id="KW-1185">Reference proteome</keyword>
<keyword id="KW-0813">Transport</keyword>
<protein>
    <recommendedName>
        <fullName>Charged multivesicular body protein 6-B</fullName>
    </recommendedName>
    <alternativeName>
        <fullName>Chromatin-modifying protein 6-B</fullName>
    </alternativeName>
</protein>
<reference key="1">
    <citation type="submission" date="2006-09" db="EMBL/GenBank/DDBJ databases">
        <authorList>
            <consortium name="NIH - Xenopus Gene Collection (XGC) project"/>
        </authorList>
    </citation>
    <scope>NUCLEOTIDE SEQUENCE [LARGE SCALE MRNA]</scope>
    <source>
        <tissue>Embryo</tissue>
        <tissue>Fat body</tissue>
    </source>
</reference>
<proteinExistence type="evidence at transcript level"/>
<accession>Q6NU11</accession>
<accession>Q0IHK5</accession>
<dbReference type="EMBL" id="BC068791">
    <property type="protein sequence ID" value="AAH68791.1"/>
    <property type="molecule type" value="mRNA"/>
</dbReference>
<dbReference type="EMBL" id="BC123113">
    <property type="protein sequence ID" value="AAI23114.1"/>
    <property type="molecule type" value="mRNA"/>
</dbReference>
<dbReference type="RefSeq" id="NP_001084537.1">
    <property type="nucleotide sequence ID" value="NM_001091068.1"/>
</dbReference>
<dbReference type="SMR" id="Q6NU11"/>
<dbReference type="DNASU" id="414484"/>
<dbReference type="GeneID" id="414484"/>
<dbReference type="KEGG" id="xla:414484"/>
<dbReference type="AGR" id="Xenbase:XB-GENE-973532"/>
<dbReference type="CTD" id="414484"/>
<dbReference type="Xenbase" id="XB-GENE-973532">
    <property type="gene designation" value="chmp6.L"/>
</dbReference>
<dbReference type="OMA" id="RIMEETH"/>
<dbReference type="OrthoDB" id="441172at2759"/>
<dbReference type="Proteomes" id="UP000186698">
    <property type="component" value="Chromosome 9_10L"/>
</dbReference>
<dbReference type="Bgee" id="414484">
    <property type="expression patterns" value="Expressed in gastrula and 19 other cell types or tissues"/>
</dbReference>
<dbReference type="GO" id="GO:0000815">
    <property type="term" value="C:ESCRT III complex"/>
    <property type="evidence" value="ECO:0000318"/>
    <property type="project" value="GO_Central"/>
</dbReference>
<dbReference type="GO" id="GO:0031902">
    <property type="term" value="C:late endosome membrane"/>
    <property type="evidence" value="ECO:0007669"/>
    <property type="project" value="UniProtKB-SubCell"/>
</dbReference>
<dbReference type="GO" id="GO:0005771">
    <property type="term" value="C:multivesicular body"/>
    <property type="evidence" value="ECO:0000318"/>
    <property type="project" value="GO_Central"/>
</dbReference>
<dbReference type="GO" id="GO:0032511">
    <property type="term" value="P:late endosome to vacuole transport via multivesicular body sorting pathway"/>
    <property type="evidence" value="ECO:0000318"/>
    <property type="project" value="GO_Central"/>
</dbReference>
<dbReference type="GO" id="GO:0015031">
    <property type="term" value="P:protein transport"/>
    <property type="evidence" value="ECO:0007669"/>
    <property type="project" value="UniProtKB-KW"/>
</dbReference>
<dbReference type="GO" id="GO:0006900">
    <property type="term" value="P:vesicle budding from membrane"/>
    <property type="evidence" value="ECO:0000318"/>
    <property type="project" value="GO_Central"/>
</dbReference>
<dbReference type="Gene3D" id="6.10.140.1230">
    <property type="match status" value="1"/>
</dbReference>
<dbReference type="InterPro" id="IPR005024">
    <property type="entry name" value="Snf7_fam"/>
</dbReference>
<dbReference type="PANTHER" id="PTHR22761">
    <property type="entry name" value="CHARGED MULTIVESICULAR BODY PROTEIN"/>
    <property type="match status" value="1"/>
</dbReference>
<dbReference type="PANTHER" id="PTHR22761:SF5">
    <property type="entry name" value="CHARGED MULTIVESICULAR BODY PROTEIN 6"/>
    <property type="match status" value="1"/>
</dbReference>
<dbReference type="Pfam" id="PF03357">
    <property type="entry name" value="Snf7"/>
    <property type="match status" value="1"/>
</dbReference>
<name>CHM6B_XENLA</name>
<feature type="initiator methionine" description="Removed" evidence="2">
    <location>
        <position position="1"/>
    </location>
</feature>
<feature type="chain" id="PRO_0000211514" description="Charged multivesicular body protein 6-B">
    <location>
        <begin position="2"/>
        <end position="200"/>
    </location>
</feature>
<feature type="region of interest" description="Disordered" evidence="3">
    <location>
        <begin position="165"/>
        <end position="200"/>
    </location>
</feature>
<feature type="coiled-coil region" evidence="2">
    <location>
        <begin position="9"/>
        <end position="102"/>
    </location>
</feature>
<feature type="short sequence motif" description="Type-2 MIT-interacting motif" evidence="1">
    <location>
        <begin position="168"/>
        <end position="179"/>
    </location>
</feature>
<feature type="lipid moiety-binding region" description="N-myristoyl glycine" evidence="2">
    <location>
        <position position="2"/>
    </location>
</feature>
<evidence type="ECO:0000250" key="1"/>
<evidence type="ECO:0000255" key="2"/>
<evidence type="ECO:0000256" key="3">
    <source>
        <dbReference type="SAM" id="MobiDB-lite"/>
    </source>
</evidence>
<evidence type="ECO:0000305" key="4"/>
<sequence>MGNLFARKRRSRVTEQDKAVLQLKQQRDKLKQYQKKITLQLQRERELAKQLLHDGKKEKAKLLLKKKRYQEQLLEKTDNQISNLEKMVDDIEFAQIEMKVIEGLKVGNEWLKKMHEVMSIEEVEKIMEETQEGIEYQRQIDEMLSGSLTAEDEEAILEELEAITQEDLELPEAPSEPLSDTVPEKQAVKNRPKPQLVAAS</sequence>
<gene>
    <name type="primary">chmp6-b</name>
</gene>